<dbReference type="EMBL" id="BC081483">
    <property type="protein sequence ID" value="AAH81483.1"/>
    <property type="molecule type" value="mRNA"/>
</dbReference>
<dbReference type="RefSeq" id="NP_001004611.1">
    <property type="nucleotide sequence ID" value="NM_001004611.1"/>
</dbReference>
<dbReference type="SMR" id="Q66I84"/>
<dbReference type="FunCoup" id="Q66I84">
    <property type="interactions" value="1388"/>
</dbReference>
<dbReference type="STRING" id="7955.ENSDARP00000025936"/>
<dbReference type="PaxDb" id="7955-ENSDARP00000025936"/>
<dbReference type="GeneID" id="447872"/>
<dbReference type="KEGG" id="dre:447872"/>
<dbReference type="AGR" id="ZFIN:ZDB-GENE-040912-35"/>
<dbReference type="CTD" id="79075"/>
<dbReference type="ZFIN" id="ZDB-GENE-040912-35">
    <property type="gene designation" value="dscc1"/>
</dbReference>
<dbReference type="eggNOG" id="KOG0798">
    <property type="taxonomic scope" value="Eukaryota"/>
</dbReference>
<dbReference type="InParanoid" id="Q66I84"/>
<dbReference type="OrthoDB" id="5199543at2759"/>
<dbReference type="PhylomeDB" id="Q66I84"/>
<dbReference type="PRO" id="PR:Q66I84"/>
<dbReference type="Proteomes" id="UP000000437">
    <property type="component" value="Chromosome 16"/>
</dbReference>
<dbReference type="GO" id="GO:0000785">
    <property type="term" value="C:chromatin"/>
    <property type="evidence" value="ECO:0000250"/>
    <property type="project" value="UniProtKB"/>
</dbReference>
<dbReference type="GO" id="GO:0000775">
    <property type="term" value="C:chromosome, centromeric region"/>
    <property type="evidence" value="ECO:0000318"/>
    <property type="project" value="GO_Central"/>
</dbReference>
<dbReference type="GO" id="GO:0031390">
    <property type="term" value="C:Ctf18 RFC-like complex"/>
    <property type="evidence" value="ECO:0000318"/>
    <property type="project" value="GO_Central"/>
</dbReference>
<dbReference type="GO" id="GO:0003677">
    <property type="term" value="F:DNA binding"/>
    <property type="evidence" value="ECO:0007669"/>
    <property type="project" value="UniProtKB-KW"/>
</dbReference>
<dbReference type="GO" id="GO:0006260">
    <property type="term" value="P:DNA replication"/>
    <property type="evidence" value="ECO:0007669"/>
    <property type="project" value="UniProtKB-KW"/>
</dbReference>
<dbReference type="GO" id="GO:0034088">
    <property type="term" value="P:maintenance of mitotic sister chromatid cohesion"/>
    <property type="evidence" value="ECO:0000250"/>
    <property type="project" value="UniProtKB"/>
</dbReference>
<dbReference type="GO" id="GO:0006275">
    <property type="term" value="P:regulation of DNA replication"/>
    <property type="evidence" value="ECO:0000250"/>
    <property type="project" value="UniProtKB"/>
</dbReference>
<dbReference type="InterPro" id="IPR019128">
    <property type="entry name" value="Dcc1"/>
</dbReference>
<dbReference type="PANTHER" id="PTHR13395:SF6">
    <property type="entry name" value="SISTER CHROMATID COHESION PROTEIN DCC1"/>
    <property type="match status" value="1"/>
</dbReference>
<dbReference type="PANTHER" id="PTHR13395">
    <property type="entry name" value="SISTER CHROMATID COHESION PROTEIN DCC1-RELATED"/>
    <property type="match status" value="1"/>
</dbReference>
<dbReference type="Pfam" id="PF09724">
    <property type="entry name" value="Dcc1"/>
    <property type="match status" value="1"/>
</dbReference>
<protein>
    <recommendedName>
        <fullName>Sister chromatid cohesion protein DCC1</fullName>
    </recommendedName>
    <alternativeName>
        <fullName>Defective in sister chromatid cohesion protein 1 homolog</fullName>
    </alternativeName>
</protein>
<proteinExistence type="evidence at transcript level"/>
<evidence type="ECO:0000250" key="1"/>
<evidence type="ECO:0000305" key="2"/>
<organism>
    <name type="scientific">Danio rerio</name>
    <name type="common">Zebrafish</name>
    <name type="synonym">Brachydanio rerio</name>
    <dbReference type="NCBI Taxonomy" id="7955"/>
    <lineage>
        <taxon>Eukaryota</taxon>
        <taxon>Metazoa</taxon>
        <taxon>Chordata</taxon>
        <taxon>Craniata</taxon>
        <taxon>Vertebrata</taxon>
        <taxon>Euteleostomi</taxon>
        <taxon>Actinopterygii</taxon>
        <taxon>Neopterygii</taxon>
        <taxon>Teleostei</taxon>
        <taxon>Ostariophysi</taxon>
        <taxon>Cypriniformes</taxon>
        <taxon>Danionidae</taxon>
        <taxon>Danioninae</taxon>
        <taxon>Danio</taxon>
    </lineage>
</organism>
<sequence length="391" mass="44656">MRTLEEVQGTLQIAKVKEEDLQPVTYCLSFGDNVSSGDYCLMEVDENLCKHIESGKSLIIRGDKDEHAVLCSEDKTYDLKIADTSNLLLFVPGCKTPDQLSDIPASPQLMHTQIWGFSNCYWELRRQRPRLKKLKKLLMENPYDGPPVGMQEEAPGLKYSMEDLLERIQASKEELEAHLGNVHACEIDGFWRILDFDYEMKLLGHVTQLVDSESWSFSKVPLSVCLEELGSLEPKAMIEHCLNCYGRRHSDEDNQVMYALDEDKVCRATAQLLLQNAVKFNLSEFQEVWQQSVPEGMGTRLDQLRGLALIDRSSKPETISLLRVEDLPEDTLERFNSLFSLREKWTQDDIEPYIQDLCGEKQTTGALLTKHARSSMQNGIKVYNSRRPVAT</sequence>
<keyword id="KW-0131">Cell cycle</keyword>
<keyword id="KW-0235">DNA replication</keyword>
<keyword id="KW-0238">DNA-binding</keyword>
<keyword id="KW-0539">Nucleus</keyword>
<keyword id="KW-1185">Reference proteome</keyword>
<name>DCC1_DANRE</name>
<reference key="1">
    <citation type="submission" date="2004-09" db="EMBL/GenBank/DDBJ databases">
        <authorList>
            <consortium name="NIH - Zebrafish Gene Collection (ZGC) project"/>
        </authorList>
    </citation>
    <scope>NUCLEOTIDE SEQUENCE [LARGE SCALE MRNA]</scope>
    <source>
        <tissue>Ovary</tissue>
    </source>
</reference>
<comment type="function">
    <text evidence="1">Loads pcna onto primed templates regulating velocity, spacing and restart activity of replication forks. May couple DNA replication to sister chromatid cohesion (By similarity).</text>
</comment>
<comment type="subunit">
    <text evidence="1">Component of the ctf18-RFC complex which consists of ctf18, ctf8, dscc1 and the RFC complex.</text>
</comment>
<comment type="subcellular location">
    <subcellularLocation>
        <location evidence="1">Nucleus</location>
    </subcellularLocation>
</comment>
<comment type="similarity">
    <text evidence="2">Belongs to the DCC1 family.</text>
</comment>
<gene>
    <name type="primary">dscc1</name>
    <name type="synonym">dcc1</name>
    <name type="ORF">zgc:103507</name>
</gene>
<feature type="chain" id="PRO_0000318066" description="Sister chromatid cohesion protein DCC1">
    <location>
        <begin position="1"/>
        <end position="391"/>
    </location>
</feature>
<accession>Q66I84</accession>